<gene>
    <name type="ordered locus">BQ2027_MB0109</name>
</gene>
<protein>
    <recommendedName>
        <fullName>Uncharacterized protein Mb0109</fullName>
    </recommendedName>
</protein>
<dbReference type="EMBL" id="LT708304">
    <property type="protein sequence ID" value="SIT98516.1"/>
    <property type="molecule type" value="Genomic_DNA"/>
</dbReference>
<dbReference type="RefSeq" id="NP_853777.1">
    <property type="nucleotide sequence ID" value="NC_002945.3"/>
</dbReference>
<dbReference type="PATRIC" id="fig|233413.5.peg.121"/>
<dbReference type="Proteomes" id="UP000001419">
    <property type="component" value="Chromosome"/>
</dbReference>
<dbReference type="Gene3D" id="3.40.50.300">
    <property type="entry name" value="P-loop containing nucleotide triphosphate hydrolases"/>
    <property type="match status" value="1"/>
</dbReference>
<dbReference type="InterPro" id="IPR011629">
    <property type="entry name" value="CobW-like_C"/>
</dbReference>
<dbReference type="InterPro" id="IPR003495">
    <property type="entry name" value="CobW/HypB/UreG_nucleotide-bd"/>
</dbReference>
<dbReference type="InterPro" id="IPR027417">
    <property type="entry name" value="P-loop_NTPase"/>
</dbReference>
<dbReference type="InterPro" id="IPR051927">
    <property type="entry name" value="Zn_Chap_cDPG_Synth"/>
</dbReference>
<dbReference type="NCBIfam" id="NF047431">
    <property type="entry name" value="hiber_recruit"/>
    <property type="match status" value="1"/>
</dbReference>
<dbReference type="PANTHER" id="PTHR43603">
    <property type="entry name" value="COBW DOMAIN-CONTAINING PROTEIN DDB_G0274527"/>
    <property type="match status" value="1"/>
</dbReference>
<dbReference type="PANTHER" id="PTHR43603:SF1">
    <property type="entry name" value="ZINC-REGULATED GTPASE METALLOPROTEIN ACTIVATOR 1"/>
    <property type="match status" value="1"/>
</dbReference>
<dbReference type="Pfam" id="PF02492">
    <property type="entry name" value="cobW"/>
    <property type="match status" value="1"/>
</dbReference>
<dbReference type="Pfam" id="PF07683">
    <property type="entry name" value="CobW_C"/>
    <property type="match status" value="1"/>
</dbReference>
<dbReference type="SMART" id="SM00833">
    <property type="entry name" value="CobW_C"/>
    <property type="match status" value="1"/>
</dbReference>
<dbReference type="SUPFAM" id="SSF90002">
    <property type="entry name" value="Hypothetical protein YjiA, C-terminal domain"/>
    <property type="match status" value="1"/>
</dbReference>
<reference key="1">
    <citation type="journal article" date="2003" name="Proc. Natl. Acad. Sci. U.S.A.">
        <title>The complete genome sequence of Mycobacterium bovis.</title>
        <authorList>
            <person name="Garnier T."/>
            <person name="Eiglmeier K."/>
            <person name="Camus J.-C."/>
            <person name="Medina N."/>
            <person name="Mansoor H."/>
            <person name="Pryor M."/>
            <person name="Duthoy S."/>
            <person name="Grondin S."/>
            <person name="Lacroix C."/>
            <person name="Monsempe C."/>
            <person name="Simon S."/>
            <person name="Harris B."/>
            <person name="Atkin R."/>
            <person name="Doggett J."/>
            <person name="Mayes R."/>
            <person name="Keating L."/>
            <person name="Wheeler P.R."/>
            <person name="Parkhill J."/>
            <person name="Barrell B.G."/>
            <person name="Cole S.T."/>
            <person name="Gordon S.V."/>
            <person name="Hewinson R.G."/>
        </authorList>
    </citation>
    <scope>NUCLEOTIDE SEQUENCE [LARGE SCALE GENOMIC DNA]</scope>
    <source>
        <strain>ATCC BAA-935 / AF2122/97</strain>
    </source>
</reference>
<reference key="2">
    <citation type="journal article" date="2017" name="Genome Announc.">
        <title>Updated reference genome sequence and annotation of Mycobacterium bovis AF2122/97.</title>
        <authorList>
            <person name="Malone K.M."/>
            <person name="Farrell D."/>
            <person name="Stuber T.P."/>
            <person name="Schubert O.T."/>
            <person name="Aebersold R."/>
            <person name="Robbe-Austerman S."/>
            <person name="Gordon S.V."/>
        </authorList>
    </citation>
    <scope>NUCLEOTIDE SEQUENCE [LARGE SCALE GENOMIC DNA]</scope>
    <scope>GENOME REANNOTATION</scope>
    <source>
        <strain>ATCC BAA-935 / AF2122/97</strain>
    </source>
</reference>
<organism>
    <name type="scientific">Mycobacterium bovis (strain ATCC BAA-935 / AF2122/97)</name>
    <dbReference type="NCBI Taxonomy" id="233413"/>
    <lineage>
        <taxon>Bacteria</taxon>
        <taxon>Bacillati</taxon>
        <taxon>Actinomycetota</taxon>
        <taxon>Actinomycetes</taxon>
        <taxon>Mycobacteriales</taxon>
        <taxon>Mycobacteriaceae</taxon>
        <taxon>Mycobacterium</taxon>
        <taxon>Mycobacterium tuberculosis complex</taxon>
    </lineage>
</organism>
<accession>P64692</accession>
<accession>A0A1R3XUY1</accession>
<accession>Q10899</accession>
<accession>X2BE15</accession>
<proteinExistence type="predicted"/>
<name>Y109_MYCBO</name>
<sequence>MRTPVILVAGQDHTDEVTGALLRRTGTVVVEHRFDGHVVRRMTATLSRGELITTEDALEFAHGCVSCTIRDDLLVLLRRLHRRDNVGRIVVHLAPWLEPQPICWAIDHVRVCVGHGYPDGPAALDVRVAAVVTCVDCVRWLPQSLGEDELPDGRTVAQVTVGQAEFADLLVLTHPEPVAVAVLRRLAPRARITGGVDRVELALAHLDDNSRRGRTDTPHTPLLAGLPPLAADGEVAIVEFSARRPFHPQRLHAAVDLLLDGVVRTRGRLWLANRPDQVMWLESAGGGLRVASAGKWLAAMAASEVAYVDLERRLFADLMWVYPFGDRHTAMTVLVCGADPTDIVNALNAALLSDDEMASPQRWQSYVDPFGDWHDDPCHEMPDAAGEFSAHRNSGESR</sequence>
<feature type="chain" id="PRO_0000103677" description="Uncharacterized protein Mb0109">
    <location>
        <begin position="1"/>
        <end position="398"/>
    </location>
</feature>
<feature type="domain" description="CobW C-terminal">
    <location>
        <begin position="235"/>
        <end position="351"/>
    </location>
</feature>
<keyword id="KW-1185">Reference proteome</keyword>